<dbReference type="EC" id="2.7.7.6" evidence="1"/>
<dbReference type="EMBL" id="AP009552">
    <property type="protein sequence ID" value="BAG03523.1"/>
    <property type="molecule type" value="Genomic_DNA"/>
</dbReference>
<dbReference type="RefSeq" id="WP_002761217.1">
    <property type="nucleotide sequence ID" value="NC_010296.1"/>
</dbReference>
<dbReference type="SMR" id="B0JNU3"/>
<dbReference type="STRING" id="449447.MAE_37010"/>
<dbReference type="PaxDb" id="449447-MAE_37010"/>
<dbReference type="EnsemblBacteria" id="BAG03523">
    <property type="protein sequence ID" value="BAG03523"/>
    <property type="gene ID" value="MAE_37010"/>
</dbReference>
<dbReference type="KEGG" id="mar:MAE_37010"/>
<dbReference type="eggNOG" id="ENOG5032RMS">
    <property type="taxonomic scope" value="Bacteria"/>
</dbReference>
<dbReference type="HOGENOM" id="CLU_175526_0_0_3"/>
<dbReference type="BioCyc" id="MAER449447:MAE_RS16015-MONOMER"/>
<dbReference type="Proteomes" id="UP000001510">
    <property type="component" value="Chromosome"/>
</dbReference>
<dbReference type="GO" id="GO:0000428">
    <property type="term" value="C:DNA-directed RNA polymerase complex"/>
    <property type="evidence" value="ECO:0007669"/>
    <property type="project" value="UniProtKB-KW"/>
</dbReference>
<dbReference type="GO" id="GO:0003677">
    <property type="term" value="F:DNA binding"/>
    <property type="evidence" value="ECO:0007669"/>
    <property type="project" value="UniProtKB-UniRule"/>
</dbReference>
<dbReference type="GO" id="GO:0003899">
    <property type="term" value="F:DNA-directed RNA polymerase activity"/>
    <property type="evidence" value="ECO:0007669"/>
    <property type="project" value="UniProtKB-UniRule"/>
</dbReference>
<dbReference type="GO" id="GO:0006351">
    <property type="term" value="P:DNA-templated transcription"/>
    <property type="evidence" value="ECO:0007669"/>
    <property type="project" value="UniProtKB-UniRule"/>
</dbReference>
<dbReference type="Gene3D" id="3.90.940.10">
    <property type="match status" value="1"/>
</dbReference>
<dbReference type="HAMAP" id="MF_00366">
    <property type="entry name" value="RNApol_bact_RpoZ"/>
    <property type="match status" value="1"/>
</dbReference>
<dbReference type="InterPro" id="IPR003716">
    <property type="entry name" value="DNA-dir_RNA_pol_omega"/>
</dbReference>
<dbReference type="InterPro" id="IPR006110">
    <property type="entry name" value="Pol_omega/Rpo6/RPB6"/>
</dbReference>
<dbReference type="InterPro" id="IPR036161">
    <property type="entry name" value="RPB6/omega-like_sf"/>
</dbReference>
<dbReference type="NCBIfam" id="NF001574">
    <property type="entry name" value="PRK00392.2-5"/>
    <property type="match status" value="1"/>
</dbReference>
<dbReference type="Pfam" id="PF01192">
    <property type="entry name" value="RNA_pol_Rpb6"/>
    <property type="match status" value="1"/>
</dbReference>
<dbReference type="SMART" id="SM01409">
    <property type="entry name" value="RNA_pol_Rpb6"/>
    <property type="match status" value="1"/>
</dbReference>
<dbReference type="SUPFAM" id="SSF63562">
    <property type="entry name" value="RPB6/omega subunit-like"/>
    <property type="match status" value="1"/>
</dbReference>
<accession>B0JNU3</accession>
<proteinExistence type="inferred from homology"/>
<keyword id="KW-0240">DNA-directed RNA polymerase</keyword>
<keyword id="KW-0548">Nucleotidyltransferase</keyword>
<keyword id="KW-0804">Transcription</keyword>
<keyword id="KW-0808">Transferase</keyword>
<organism>
    <name type="scientific">Microcystis aeruginosa (strain NIES-843 / IAM M-2473)</name>
    <dbReference type="NCBI Taxonomy" id="449447"/>
    <lineage>
        <taxon>Bacteria</taxon>
        <taxon>Bacillati</taxon>
        <taxon>Cyanobacteriota</taxon>
        <taxon>Cyanophyceae</taxon>
        <taxon>Oscillatoriophycideae</taxon>
        <taxon>Chroococcales</taxon>
        <taxon>Microcystaceae</taxon>
        <taxon>Microcystis</taxon>
    </lineage>
</organism>
<protein>
    <recommendedName>
        <fullName evidence="1">DNA-directed RNA polymerase subunit omega</fullName>
        <shortName evidence="1">RNAP omega subunit</shortName>
        <ecNumber evidence="1">2.7.7.6</ecNumber>
    </recommendedName>
    <alternativeName>
        <fullName evidence="1">RNA polymerase omega subunit</fullName>
    </alternativeName>
    <alternativeName>
        <fullName evidence="1">Transcriptase subunit omega</fullName>
    </alternativeName>
</protein>
<reference key="1">
    <citation type="journal article" date="2007" name="DNA Res.">
        <title>Complete genomic structure of the bloom-forming toxic cyanobacterium Microcystis aeruginosa NIES-843.</title>
        <authorList>
            <person name="Kaneko T."/>
            <person name="Nakajima N."/>
            <person name="Okamoto S."/>
            <person name="Suzuki I."/>
            <person name="Tanabe Y."/>
            <person name="Tamaoki M."/>
            <person name="Nakamura Y."/>
            <person name="Kasai F."/>
            <person name="Watanabe A."/>
            <person name="Kawashima K."/>
            <person name="Kishida Y."/>
            <person name="Ono A."/>
            <person name="Shimizu Y."/>
            <person name="Takahashi C."/>
            <person name="Minami C."/>
            <person name="Fujishiro T."/>
            <person name="Kohara M."/>
            <person name="Katoh M."/>
            <person name="Nakazaki N."/>
            <person name="Nakayama S."/>
            <person name="Yamada M."/>
            <person name="Tabata S."/>
            <person name="Watanabe M.M."/>
        </authorList>
    </citation>
    <scope>NUCLEOTIDE SEQUENCE [LARGE SCALE GENOMIC DNA]</scope>
    <source>
        <strain>NIES-843 / IAM M-247</strain>
    </source>
</reference>
<comment type="function">
    <text evidence="1">Promotes RNA polymerase assembly. Latches the N- and C-terminal regions of the beta' subunit thereby facilitating its interaction with the beta and alpha subunits.</text>
</comment>
<comment type="catalytic activity">
    <reaction evidence="1">
        <text>RNA(n) + a ribonucleoside 5'-triphosphate = RNA(n+1) + diphosphate</text>
        <dbReference type="Rhea" id="RHEA:21248"/>
        <dbReference type="Rhea" id="RHEA-COMP:14527"/>
        <dbReference type="Rhea" id="RHEA-COMP:17342"/>
        <dbReference type="ChEBI" id="CHEBI:33019"/>
        <dbReference type="ChEBI" id="CHEBI:61557"/>
        <dbReference type="ChEBI" id="CHEBI:140395"/>
        <dbReference type="EC" id="2.7.7.6"/>
    </reaction>
</comment>
<comment type="subunit">
    <text evidence="1">In cyanobacteria the RNAP catalytic core is composed of 2 alpha, 1 beta, 1 beta', 1 gamma and 1 omega subunit. When a sigma factor is associated with the core the holoenzyme is formed, which can initiate transcription.</text>
</comment>
<comment type="similarity">
    <text evidence="1">Belongs to the RNA polymerase subunit omega family.</text>
</comment>
<sequence>MSKRFKFDSSEMIYLTDKLMNAASNRYSIVVQVARRAKRVRYDTVENIDDPMIKPVQRALMEMTDELTEPELLRD</sequence>
<gene>
    <name evidence="1" type="primary">rpoZ</name>
    <name type="ordered locus">MAE_37010</name>
</gene>
<feature type="chain" id="PRO_1000079635" description="DNA-directed RNA polymerase subunit omega">
    <location>
        <begin position="1"/>
        <end position="75"/>
    </location>
</feature>
<evidence type="ECO:0000255" key="1">
    <source>
        <dbReference type="HAMAP-Rule" id="MF_00366"/>
    </source>
</evidence>
<name>RPOZ_MICAN</name>